<dbReference type="EMBL" id="BX571857">
    <property type="protein sequence ID" value="CAG42595.1"/>
    <property type="molecule type" value="Genomic_DNA"/>
</dbReference>
<dbReference type="RefSeq" id="WP_000402803.1">
    <property type="nucleotide sequence ID" value="NC_002953.3"/>
</dbReference>
<dbReference type="SMR" id="Q6GAX6"/>
<dbReference type="GeneID" id="98345271"/>
<dbReference type="KEGG" id="sas:SAS0820"/>
<dbReference type="HOGENOM" id="CLU_082058_3_1_9"/>
<dbReference type="GO" id="GO:0005886">
    <property type="term" value="C:plasma membrane"/>
    <property type="evidence" value="ECO:0007669"/>
    <property type="project" value="UniProtKB-SubCell"/>
</dbReference>
<dbReference type="GO" id="GO:0015297">
    <property type="term" value="F:antiporter activity"/>
    <property type="evidence" value="ECO:0007669"/>
    <property type="project" value="UniProtKB-KW"/>
</dbReference>
<dbReference type="GO" id="GO:0008324">
    <property type="term" value="F:monoatomic cation transmembrane transporter activity"/>
    <property type="evidence" value="ECO:0007669"/>
    <property type="project" value="InterPro"/>
</dbReference>
<dbReference type="GO" id="GO:1902600">
    <property type="term" value="P:proton transmembrane transport"/>
    <property type="evidence" value="ECO:0007669"/>
    <property type="project" value="UniProtKB-KW"/>
</dbReference>
<dbReference type="GO" id="GO:0006814">
    <property type="term" value="P:sodium ion transport"/>
    <property type="evidence" value="ECO:0007669"/>
    <property type="project" value="UniProtKB-KW"/>
</dbReference>
<dbReference type="Gene3D" id="1.10.287.3510">
    <property type="match status" value="1"/>
</dbReference>
<dbReference type="InterPro" id="IPR050601">
    <property type="entry name" value="CPA3_antiporter_subunitC"/>
</dbReference>
<dbReference type="InterPro" id="IPR006673">
    <property type="entry name" value="Mnh_C1_su"/>
</dbReference>
<dbReference type="InterPro" id="IPR039428">
    <property type="entry name" value="NUOK/Mnh_C1-like"/>
</dbReference>
<dbReference type="NCBIfam" id="TIGR00941">
    <property type="entry name" value="2a6301s03"/>
    <property type="match status" value="1"/>
</dbReference>
<dbReference type="NCBIfam" id="NF006372">
    <property type="entry name" value="PRK08600.1"/>
    <property type="match status" value="1"/>
</dbReference>
<dbReference type="NCBIfam" id="NF006573">
    <property type="entry name" value="PRK09094.1"/>
    <property type="match status" value="1"/>
</dbReference>
<dbReference type="NCBIfam" id="NF009303">
    <property type="entry name" value="PRK12660.1"/>
    <property type="match status" value="1"/>
</dbReference>
<dbReference type="PANTHER" id="PTHR34583">
    <property type="entry name" value="ANTIPORTER SUBUNIT MNHC2-RELATED"/>
    <property type="match status" value="1"/>
</dbReference>
<dbReference type="PANTHER" id="PTHR34583:SF2">
    <property type="entry name" value="ANTIPORTER SUBUNIT MNHC2-RELATED"/>
    <property type="match status" value="1"/>
</dbReference>
<dbReference type="Pfam" id="PF00420">
    <property type="entry name" value="Oxidored_q2"/>
    <property type="match status" value="1"/>
</dbReference>
<name>MNHC1_STAAS</name>
<organism>
    <name type="scientific">Staphylococcus aureus (strain MSSA476)</name>
    <dbReference type="NCBI Taxonomy" id="282459"/>
    <lineage>
        <taxon>Bacteria</taxon>
        <taxon>Bacillati</taxon>
        <taxon>Bacillota</taxon>
        <taxon>Bacilli</taxon>
        <taxon>Bacillales</taxon>
        <taxon>Staphylococcaceae</taxon>
        <taxon>Staphylococcus</taxon>
    </lineage>
</organism>
<keyword id="KW-0050">Antiport</keyword>
<keyword id="KW-1003">Cell membrane</keyword>
<keyword id="KW-0375">Hydrogen ion transport</keyword>
<keyword id="KW-0406">Ion transport</keyword>
<keyword id="KW-0472">Membrane</keyword>
<keyword id="KW-0915">Sodium</keyword>
<keyword id="KW-0739">Sodium transport</keyword>
<keyword id="KW-0812">Transmembrane</keyword>
<keyword id="KW-1133">Transmembrane helix</keyword>
<keyword id="KW-0813">Transport</keyword>
<reference key="1">
    <citation type="journal article" date="2004" name="Proc. Natl. Acad. Sci. U.S.A.">
        <title>Complete genomes of two clinical Staphylococcus aureus strains: evidence for the rapid evolution of virulence and drug resistance.</title>
        <authorList>
            <person name="Holden M.T.G."/>
            <person name="Feil E.J."/>
            <person name="Lindsay J.A."/>
            <person name="Peacock S.J."/>
            <person name="Day N.P.J."/>
            <person name="Enright M.C."/>
            <person name="Foster T.J."/>
            <person name="Moore C.E."/>
            <person name="Hurst L."/>
            <person name="Atkin R."/>
            <person name="Barron A."/>
            <person name="Bason N."/>
            <person name="Bentley S.D."/>
            <person name="Chillingworth C."/>
            <person name="Chillingworth T."/>
            <person name="Churcher C."/>
            <person name="Clark L."/>
            <person name="Corton C."/>
            <person name="Cronin A."/>
            <person name="Doggett J."/>
            <person name="Dowd L."/>
            <person name="Feltwell T."/>
            <person name="Hance Z."/>
            <person name="Harris B."/>
            <person name="Hauser H."/>
            <person name="Holroyd S."/>
            <person name="Jagels K."/>
            <person name="James K.D."/>
            <person name="Lennard N."/>
            <person name="Line A."/>
            <person name="Mayes R."/>
            <person name="Moule S."/>
            <person name="Mungall K."/>
            <person name="Ormond D."/>
            <person name="Quail M.A."/>
            <person name="Rabbinowitsch E."/>
            <person name="Rutherford K.M."/>
            <person name="Sanders M."/>
            <person name="Sharp S."/>
            <person name="Simmonds M."/>
            <person name="Stevens K."/>
            <person name="Whitehead S."/>
            <person name="Barrell B.G."/>
            <person name="Spratt B.G."/>
            <person name="Parkhill J."/>
        </authorList>
    </citation>
    <scope>NUCLEOTIDE SEQUENCE [LARGE SCALE GENOMIC DNA]</scope>
    <source>
        <strain>MSSA476</strain>
    </source>
</reference>
<accession>Q6GAX6</accession>
<gene>
    <name type="primary">mnhC1</name>
    <name type="ordered locus">SAS0820</name>
</gene>
<protein>
    <recommendedName>
        <fullName>Na(+)/H(+) antiporter subunit C1</fullName>
    </recommendedName>
    <alternativeName>
        <fullName>Mnh complex subunit C1</fullName>
    </alternativeName>
</protein>
<proteinExistence type="inferred from homology"/>
<sequence>MEIIMIFVSGILTAISVYLVLSKSLIRIVMGTTLLTHAANLFLITMGGLKHGTVPIYEANVKSYVDPIPQALILTAIVIAFATTAFFLVLAFRTYKELGTDNVESMKGVPEDD</sequence>
<comment type="function">
    <text evidence="1">Mnh complex is a Na(+)/H(+) antiporter involved in Na(+) excretion.</text>
</comment>
<comment type="subunit">
    <text evidence="1">May form a heterooligomeric complex that consists of seven subunits: mnhA1, mnhB1, mnhC1, mnhD1, mnhE1, mnhF1 and mnhG1.</text>
</comment>
<comment type="subcellular location">
    <subcellularLocation>
        <location evidence="3">Cell membrane</location>
        <topology evidence="3">Multi-pass membrane protein</topology>
    </subcellularLocation>
</comment>
<comment type="similarity">
    <text evidence="3">Belongs to the CPA3 antiporters (TC 2.A.63) subunit C family.</text>
</comment>
<evidence type="ECO:0000250" key="1"/>
<evidence type="ECO:0000255" key="2"/>
<evidence type="ECO:0000305" key="3"/>
<feature type="chain" id="PRO_0000089151" description="Na(+)/H(+) antiporter subunit C1">
    <location>
        <begin position="1"/>
        <end position="113"/>
    </location>
</feature>
<feature type="transmembrane region" description="Helical" evidence="2">
    <location>
        <begin position="4"/>
        <end position="21"/>
    </location>
</feature>
<feature type="transmembrane region" description="Helical" evidence="2">
    <location>
        <begin position="26"/>
        <end position="48"/>
    </location>
</feature>
<feature type="transmembrane region" description="Helical" evidence="2">
    <location>
        <begin position="68"/>
        <end position="90"/>
    </location>
</feature>